<gene>
    <name evidence="1" type="primary">rnfE</name>
    <name type="ordered locus">VC0395_A0533</name>
    <name type="ordered locus">VC395_1027</name>
</gene>
<evidence type="ECO:0000255" key="1">
    <source>
        <dbReference type="HAMAP-Rule" id="MF_00478"/>
    </source>
</evidence>
<evidence type="ECO:0000269" key="2">
    <source>
    </source>
</evidence>
<evidence type="ECO:0000305" key="3"/>
<evidence type="ECO:0000305" key="4">
    <source>
    </source>
</evidence>
<sequence length="230" mass="24695">MSENRTLMLNGMWNNNPALVQLLGLCPLLAVSSTVTNALGLGIATLLVLVGSNVTVSLVRDYVPKEVRIPVFVMIIASLVTCVQLLMNAYAYGLYLSLGIFIPLIVTNCIIIGRAEAFASKNDVLPAALDGFWMGLGMTSVLVVLGSLREIIGNGTLFDGADLLLGEWAKVLRIEVFHFDSAFLLALLPPGAFIGVGFLIAAKSVIDKQIAARQPKQQKQAIERARVTNV</sequence>
<keyword id="KW-0997">Cell inner membrane</keyword>
<keyword id="KW-1003">Cell membrane</keyword>
<keyword id="KW-0249">Electron transport</keyword>
<keyword id="KW-0472">Membrane</keyword>
<keyword id="KW-1278">Translocase</keyword>
<keyword id="KW-0812">Transmembrane</keyword>
<keyword id="KW-1133">Transmembrane helix</keyword>
<keyword id="KW-0813">Transport</keyword>
<name>RNFE_VIBC3</name>
<feature type="chain" id="PRO_1000072400" description="Ion-translocating oxidoreductase complex subunit E">
    <location>
        <begin position="1"/>
        <end position="230"/>
    </location>
</feature>
<feature type="topological domain" description="Cytoplasmic" evidence="4">
    <location>
        <begin position="1"/>
        <end position="17"/>
    </location>
</feature>
<feature type="transmembrane region" description="Helical" evidence="1">
    <location>
        <begin position="18"/>
        <end position="38"/>
    </location>
</feature>
<feature type="transmembrane region" description="Helical" evidence="1">
    <location>
        <begin position="39"/>
        <end position="59"/>
    </location>
</feature>
<feature type="topological domain" description="Cytoplasmic" evidence="4">
    <location>
        <begin position="60"/>
        <end position="68"/>
    </location>
</feature>
<feature type="transmembrane region" description="Helical" evidence="1">
    <location>
        <begin position="69"/>
        <end position="89"/>
    </location>
</feature>
<feature type="topological domain" description="Periplasmic" evidence="4">
    <location>
        <begin position="90"/>
        <end position="92"/>
    </location>
</feature>
<feature type="transmembrane region" description="Helical" evidence="1">
    <location>
        <begin position="93"/>
        <end position="113"/>
    </location>
</feature>
<feature type="topological domain" description="Cytoplasmic" evidence="4">
    <location>
        <begin position="114"/>
        <end position="123"/>
    </location>
</feature>
<feature type="transmembrane region" description="Helical" evidence="1">
    <location>
        <begin position="124"/>
        <end position="144"/>
    </location>
</feature>
<feature type="topological domain" description="Periplasmic" evidence="4">
    <location>
        <begin position="145"/>
        <end position="181"/>
    </location>
</feature>
<feature type="transmembrane region" description="Helical" evidence="1">
    <location>
        <begin position="182"/>
        <end position="202"/>
    </location>
</feature>
<feature type="topological domain" description="Cytoplasmic" evidence="2">
    <location>
        <begin position="203"/>
        <end position="230"/>
    </location>
</feature>
<accession>A5F2S7</accession>
<accession>C3LZ23</accession>
<organism>
    <name type="scientific">Vibrio cholerae serotype O1 (strain ATCC 39541 / Classical Ogawa 395 / O395)</name>
    <dbReference type="NCBI Taxonomy" id="345073"/>
    <lineage>
        <taxon>Bacteria</taxon>
        <taxon>Pseudomonadati</taxon>
        <taxon>Pseudomonadota</taxon>
        <taxon>Gammaproteobacteria</taxon>
        <taxon>Vibrionales</taxon>
        <taxon>Vibrionaceae</taxon>
        <taxon>Vibrio</taxon>
    </lineage>
</organism>
<comment type="function">
    <text evidence="1">Part of a membrane-bound complex that couples electron transfer with translocation of ions across the membrane.</text>
</comment>
<comment type="subunit">
    <text evidence="1">The complex is composed of six subunits: RnfA, RnfB, RnfC, RnfD, RnfE and RnfG.</text>
</comment>
<comment type="subcellular location">
    <subcellularLocation>
        <location evidence="1 2">Cell inner membrane</location>
        <topology evidence="1">Multi-pass membrane protein</topology>
    </subcellularLocation>
</comment>
<comment type="similarity">
    <text evidence="1">Belongs to the NqrDE/RnfAE family.</text>
</comment>
<reference key="1">
    <citation type="submission" date="2007-03" db="EMBL/GenBank/DDBJ databases">
        <authorList>
            <person name="Heidelberg J."/>
        </authorList>
    </citation>
    <scope>NUCLEOTIDE SEQUENCE [LARGE SCALE GENOMIC DNA]</scope>
    <source>
        <strain>ATCC 39541 / Classical Ogawa 395 / O395</strain>
    </source>
</reference>
<reference key="2">
    <citation type="journal article" date="2008" name="PLoS ONE">
        <title>A recalibrated molecular clock and independent origins for the cholera pandemic clones.</title>
        <authorList>
            <person name="Feng L."/>
            <person name="Reeves P.R."/>
            <person name="Lan R."/>
            <person name="Ren Y."/>
            <person name="Gao C."/>
            <person name="Zhou Z."/>
            <person name="Ren Y."/>
            <person name="Cheng J."/>
            <person name="Wang W."/>
            <person name="Wang J."/>
            <person name="Qian W."/>
            <person name="Li D."/>
            <person name="Wang L."/>
        </authorList>
    </citation>
    <scope>NUCLEOTIDE SEQUENCE [LARGE SCALE GENOMIC DNA]</scope>
    <source>
        <strain>ATCC 39541 / Classical Ogawa 395 / O395</strain>
    </source>
</reference>
<reference key="3">
    <citation type="journal article" date="2015" name="Biochemistry">
        <title>Complete topology of the RNF complex from Vibrio cholerae.</title>
        <authorList>
            <person name="Hreha T.N."/>
            <person name="Mezic K.G."/>
            <person name="Herce H.D."/>
            <person name="Duffy E.B."/>
            <person name="Bourges A."/>
            <person name="Pryshchep S."/>
            <person name="Juarez O."/>
            <person name="Barquera B."/>
        </authorList>
    </citation>
    <scope>SUBCELLULAR LOCATION</scope>
    <scope>TOPOLOGY</scope>
    <source>
        <strain>ATCC 39541 / Classical Ogawa 395 / O395</strain>
    </source>
</reference>
<proteinExistence type="evidence at protein level"/>
<dbReference type="EC" id="7.-.-.-" evidence="1 3"/>
<dbReference type="EMBL" id="CP000627">
    <property type="protein sequence ID" value="ABQ19507.1"/>
    <property type="molecule type" value="Genomic_DNA"/>
</dbReference>
<dbReference type="EMBL" id="CP001235">
    <property type="protein sequence ID" value="ACP09039.1"/>
    <property type="molecule type" value="Genomic_DNA"/>
</dbReference>
<dbReference type="RefSeq" id="WP_001293888.1">
    <property type="nucleotide sequence ID" value="NZ_JAACZH010000005.1"/>
</dbReference>
<dbReference type="SMR" id="A5F2S7"/>
<dbReference type="KEGG" id="vco:VC0395_A0533"/>
<dbReference type="KEGG" id="vcr:VC395_1027"/>
<dbReference type="PATRIC" id="fig|345073.21.peg.997"/>
<dbReference type="eggNOG" id="COG4660">
    <property type="taxonomic scope" value="Bacteria"/>
</dbReference>
<dbReference type="HOGENOM" id="CLU_046659_1_0_6"/>
<dbReference type="OrthoDB" id="9782945at2"/>
<dbReference type="Proteomes" id="UP000000249">
    <property type="component" value="Chromosome 2"/>
</dbReference>
<dbReference type="GO" id="GO:0005886">
    <property type="term" value="C:plasma membrane"/>
    <property type="evidence" value="ECO:0007669"/>
    <property type="project" value="UniProtKB-SubCell"/>
</dbReference>
<dbReference type="GO" id="GO:0022900">
    <property type="term" value="P:electron transport chain"/>
    <property type="evidence" value="ECO:0007669"/>
    <property type="project" value="UniProtKB-UniRule"/>
</dbReference>
<dbReference type="HAMAP" id="MF_00478">
    <property type="entry name" value="RsxE_RnfE"/>
    <property type="match status" value="1"/>
</dbReference>
<dbReference type="InterPro" id="IPR003667">
    <property type="entry name" value="NqrDE/RnfAE"/>
</dbReference>
<dbReference type="InterPro" id="IPR010968">
    <property type="entry name" value="RnfE"/>
</dbReference>
<dbReference type="NCBIfam" id="NF009070">
    <property type="entry name" value="PRK12405.1"/>
    <property type="match status" value="1"/>
</dbReference>
<dbReference type="NCBIfam" id="TIGR01948">
    <property type="entry name" value="rnfE"/>
    <property type="match status" value="1"/>
</dbReference>
<dbReference type="PANTHER" id="PTHR30586">
    <property type="entry name" value="ELECTRON TRANSPORT COMPLEX PROTEIN RNFE"/>
    <property type="match status" value="1"/>
</dbReference>
<dbReference type="PANTHER" id="PTHR30586:SF0">
    <property type="entry name" value="ION-TRANSLOCATING OXIDOREDUCTASE COMPLEX SUBUNIT E"/>
    <property type="match status" value="1"/>
</dbReference>
<dbReference type="Pfam" id="PF02508">
    <property type="entry name" value="Rnf-Nqr"/>
    <property type="match status" value="1"/>
</dbReference>
<dbReference type="PIRSF" id="PIRSF006102">
    <property type="entry name" value="NQR_DE"/>
    <property type="match status" value="1"/>
</dbReference>
<protein>
    <recommendedName>
        <fullName evidence="1 3">Ion-translocating oxidoreductase complex subunit E</fullName>
        <ecNumber evidence="1 3">7.-.-.-</ecNumber>
    </recommendedName>
    <alternativeName>
        <fullName evidence="1 3">Rnf electron transport complex subunit E</fullName>
    </alternativeName>
</protein>